<gene>
    <name type="ordered locus">CPn_0065</name>
    <name type="ordered locus">CP_0709</name>
    <name type="ordered locus">CPj0065</name>
    <name type="ordered locus">CpB0066</name>
</gene>
<evidence type="ECO:0000305" key="1"/>
<feature type="chain" id="PRO_0000218352" description="Uncharacterized protein CPn_0065/CP_0709/CPj0065/CpB0066">
    <location>
        <begin position="1"/>
        <end position="576"/>
    </location>
</feature>
<feature type="sequence conflict" description="In Ref. 1; AAD18218." evidence="1" ref="1">
    <original>E</original>
    <variation>K</variation>
    <location>
        <position position="143"/>
    </location>
</feature>
<feature type="sequence conflict" description="In Ref. 4; AAP97999." evidence="1" ref="4">
    <original>M</original>
    <variation>V</variation>
    <location>
        <position position="449"/>
    </location>
</feature>
<comment type="similarity">
    <text evidence="1">Belongs to the chlamydial CPn_0065/CT_288/TC_0561 family.</text>
</comment>
<comment type="sequence caution" evidence="1">
    <conflict type="erroneous initiation">
        <sequence resource="EMBL-CDS" id="AAF38517"/>
    </conflict>
</comment>
<comment type="sequence caution" evidence="1">
    <conflict type="erroneous initiation">
        <sequence resource="EMBL-CDS" id="AAP97999"/>
    </conflict>
</comment>
<dbReference type="EMBL" id="AE001363">
    <property type="protein sequence ID" value="AAD18218.1"/>
    <property type="molecule type" value="Genomic_DNA"/>
</dbReference>
<dbReference type="EMBL" id="AE002161">
    <property type="protein sequence ID" value="AAF38517.1"/>
    <property type="status" value="ALT_INIT"/>
    <property type="molecule type" value="Genomic_DNA"/>
</dbReference>
<dbReference type="EMBL" id="BA000008">
    <property type="protein sequence ID" value="BAA98276.1"/>
    <property type="molecule type" value="Genomic_DNA"/>
</dbReference>
<dbReference type="EMBL" id="AE009440">
    <property type="protein sequence ID" value="AAP97999.1"/>
    <property type="status" value="ALT_INIT"/>
    <property type="molecule type" value="Genomic_DNA"/>
</dbReference>
<dbReference type="PIR" id="B72125">
    <property type="entry name" value="B72125"/>
</dbReference>
<dbReference type="PIR" id="B86499">
    <property type="entry name" value="B86499"/>
</dbReference>
<dbReference type="PIR" id="C81546">
    <property type="entry name" value="C81546"/>
</dbReference>
<dbReference type="RefSeq" id="NP_224273.1">
    <property type="nucleotide sequence ID" value="NC_000922.1"/>
</dbReference>
<dbReference type="RefSeq" id="WP_010882715.1">
    <property type="nucleotide sequence ID" value="NZ_LN847257.1"/>
</dbReference>
<dbReference type="RefSeq" id="WP_010895274.1">
    <property type="nucleotide sequence ID" value="NZ_LN846995.1"/>
</dbReference>
<dbReference type="SMR" id="Q9Z9B6"/>
<dbReference type="STRING" id="406984.CPK_ORF00570"/>
<dbReference type="KEGG" id="cpa:CP_0709"/>
<dbReference type="KEGG" id="cpj:CPj0065"/>
<dbReference type="KEGG" id="cpn:CPn_0065"/>
<dbReference type="KEGG" id="cpt:CpB0066"/>
<dbReference type="PATRIC" id="fig|115713.3.peg.75"/>
<dbReference type="HOGENOM" id="CLU_036061_0_0_0"/>
<dbReference type="OrthoDB" id="17718at2"/>
<dbReference type="Proteomes" id="UP000000583">
    <property type="component" value="Chromosome"/>
</dbReference>
<dbReference type="Proteomes" id="UP000000801">
    <property type="component" value="Chromosome"/>
</dbReference>
<proteinExistence type="inferred from homology"/>
<sequence>MTDFPTHFKGPKLNPIKVNPNFFERNPKVARVLQITAVVLGIIALLSGIVLIIGTPLGAPISMILGGCLLASGGALFVGGTIATILQARNSYKKAVNQKKLSEPLMERPELKALDYSLDLKEVWDLHHSVVKHLKKLDLNLSETQREVLNQIKIDDEGPSLGECAAMISENYDACLKMLAYREELLKEQTQYQETRFNQNLTHRNKVLLSILSRITDNISKAGGVFSLKFSTLSSRMSRIHTTTTVILALSAVVSVMVVAALIPGGILALPILLAVAISAGVIVTGLSYLVRQILSNTKRNRQDFYKDFVKNVDIELLNQTVTLQRFLFEMLKGVLKEEEEVSLEGQDWYTQYITNAPIEKRLIEEIRVTYKEIDAQTKKMKTDLEFLENEVRSGRLSVASPSEDPSETPIFTQGKEFAKLRRQTSQNISTIYGPDNENIDPEFSLPWMPKKEEEIDHSLEPVTKLEPGSREELLLVEGVNPTLRELNMRIALLQQQLSSVRKWRHPRGEHYGNVIYSDTELDRIQMLEGAFYNHLREAQEEITQSLGDLVDIQNRILGIIVEGDSDSRTEEEPQE</sequence>
<protein>
    <recommendedName>
        <fullName>Uncharacterized protein CPn_0065/CP_0709/CPj0065/CpB0066</fullName>
    </recommendedName>
</protein>
<organism>
    <name type="scientific">Chlamydia pneumoniae</name>
    <name type="common">Chlamydophila pneumoniae</name>
    <dbReference type="NCBI Taxonomy" id="83558"/>
    <lineage>
        <taxon>Bacteria</taxon>
        <taxon>Pseudomonadati</taxon>
        <taxon>Chlamydiota</taxon>
        <taxon>Chlamydiia</taxon>
        <taxon>Chlamydiales</taxon>
        <taxon>Chlamydiaceae</taxon>
        <taxon>Chlamydia/Chlamydophila group</taxon>
        <taxon>Chlamydia</taxon>
    </lineage>
</organism>
<name>Y065_CHLPN</name>
<reference key="1">
    <citation type="journal article" date="1999" name="Nat. Genet.">
        <title>Comparative genomes of Chlamydia pneumoniae and C. trachomatis.</title>
        <authorList>
            <person name="Kalman S."/>
            <person name="Mitchell W.P."/>
            <person name="Marathe R."/>
            <person name="Lammel C.J."/>
            <person name="Fan J."/>
            <person name="Hyman R.W."/>
            <person name="Olinger L."/>
            <person name="Grimwood J."/>
            <person name="Davis R.W."/>
            <person name="Stephens R.S."/>
        </authorList>
    </citation>
    <scope>NUCLEOTIDE SEQUENCE [LARGE SCALE GENOMIC DNA]</scope>
    <source>
        <strain>CWL029</strain>
    </source>
</reference>
<reference key="2">
    <citation type="journal article" date="2000" name="Nucleic Acids Res.">
        <title>Genome sequences of Chlamydia trachomatis MoPn and Chlamydia pneumoniae AR39.</title>
        <authorList>
            <person name="Read T.D."/>
            <person name="Brunham R.C."/>
            <person name="Shen C."/>
            <person name="Gill S.R."/>
            <person name="Heidelberg J.F."/>
            <person name="White O."/>
            <person name="Hickey E.K."/>
            <person name="Peterson J.D."/>
            <person name="Utterback T.R."/>
            <person name="Berry K.J."/>
            <person name="Bass S."/>
            <person name="Linher K.D."/>
            <person name="Weidman J.F."/>
            <person name="Khouri H.M."/>
            <person name="Craven B."/>
            <person name="Bowman C."/>
            <person name="Dodson R.J."/>
            <person name="Gwinn M.L."/>
            <person name="Nelson W.C."/>
            <person name="DeBoy R.T."/>
            <person name="Kolonay J.F."/>
            <person name="McClarty G."/>
            <person name="Salzberg S.L."/>
            <person name="Eisen J.A."/>
            <person name="Fraser C.M."/>
        </authorList>
    </citation>
    <scope>NUCLEOTIDE SEQUENCE [LARGE SCALE GENOMIC DNA]</scope>
    <source>
        <strain>AR39</strain>
    </source>
</reference>
<reference key="3">
    <citation type="journal article" date="2000" name="Nucleic Acids Res.">
        <title>Comparison of whole genome sequences of Chlamydia pneumoniae J138 from Japan and CWL029 from USA.</title>
        <authorList>
            <person name="Shirai M."/>
            <person name="Hirakawa H."/>
            <person name="Kimoto M."/>
            <person name="Tabuchi M."/>
            <person name="Kishi F."/>
            <person name="Ouchi K."/>
            <person name="Shiba T."/>
            <person name="Ishii K."/>
            <person name="Hattori M."/>
            <person name="Kuhara S."/>
            <person name="Nakazawa T."/>
        </authorList>
    </citation>
    <scope>NUCLEOTIDE SEQUENCE [LARGE SCALE GENOMIC DNA]</scope>
    <source>
        <strain>J138</strain>
    </source>
</reference>
<reference key="4">
    <citation type="submission" date="2002-05" db="EMBL/GenBank/DDBJ databases">
        <title>The genome sequence of Chlamydia pneumoniae TW183 and comparison with other Chlamydia strains based on whole genome sequence analysis.</title>
        <authorList>
            <person name="Geng M.M."/>
            <person name="Schuhmacher A."/>
            <person name="Muehldorfer I."/>
            <person name="Bensch K.W."/>
            <person name="Schaefer K.P."/>
            <person name="Schneider S."/>
            <person name="Pohl T."/>
            <person name="Essig A."/>
            <person name="Marre R."/>
            <person name="Melchers K."/>
        </authorList>
    </citation>
    <scope>NUCLEOTIDE SEQUENCE [LARGE SCALE GENOMIC DNA]</scope>
    <source>
        <strain>TW-183</strain>
    </source>
</reference>
<accession>Q9Z9B6</accession>
<accession>Q9JSK1</accession>
<accession>Q9K206</accession>